<reference key="1">
    <citation type="journal article" date="2005" name="Nat. Biotechnol.">
        <title>The genome sequence of the ethanologenic bacterium Zymomonas mobilis ZM4.</title>
        <authorList>
            <person name="Seo J.-S."/>
            <person name="Chong H."/>
            <person name="Park H.S."/>
            <person name="Yoon K.-O."/>
            <person name="Jung C."/>
            <person name="Kim J.J."/>
            <person name="Hong J.H."/>
            <person name="Kim H."/>
            <person name="Kim J.-H."/>
            <person name="Kil J.-I."/>
            <person name="Park C.J."/>
            <person name="Oh H.-M."/>
            <person name="Lee J.-S."/>
            <person name="Jin S.-J."/>
            <person name="Um H.-W."/>
            <person name="Lee H.-J."/>
            <person name="Oh S.-J."/>
            <person name="Kim J.Y."/>
            <person name="Kang H.L."/>
            <person name="Lee S.Y."/>
            <person name="Lee K.J."/>
            <person name="Kang H.S."/>
        </authorList>
    </citation>
    <scope>NUCLEOTIDE SEQUENCE [LARGE SCALE GENOMIC DNA]</scope>
    <source>
        <strain>ATCC 31821 / ZM4 / CP4</strain>
    </source>
</reference>
<name>QUEC_ZYMMO</name>
<gene>
    <name evidence="1" type="primary">queC</name>
    <name type="ordered locus">ZMO1023</name>
</gene>
<protein>
    <recommendedName>
        <fullName evidence="1">7-cyano-7-deazaguanine synthase</fullName>
        <ecNumber evidence="1">6.3.4.20</ecNumber>
    </recommendedName>
    <alternativeName>
        <fullName evidence="1">7-cyano-7-carbaguanine synthase</fullName>
    </alternativeName>
    <alternativeName>
        <fullName evidence="1">PreQ(0) synthase</fullName>
    </alternativeName>
    <alternativeName>
        <fullName evidence="1">Queuosine biosynthesis protein QueC</fullName>
    </alternativeName>
</protein>
<feature type="chain" id="PRO_0000246971" description="7-cyano-7-deazaguanine synthase">
    <location>
        <begin position="1"/>
        <end position="254"/>
    </location>
</feature>
<feature type="binding site" evidence="1">
    <location>
        <begin position="30"/>
        <end position="40"/>
    </location>
    <ligand>
        <name>ATP</name>
        <dbReference type="ChEBI" id="CHEBI:30616"/>
    </ligand>
</feature>
<feature type="binding site" evidence="1">
    <location>
        <position position="218"/>
    </location>
    <ligand>
        <name>Zn(2+)</name>
        <dbReference type="ChEBI" id="CHEBI:29105"/>
    </ligand>
</feature>
<feature type="binding site" evidence="1">
    <location>
        <position position="233"/>
    </location>
    <ligand>
        <name>Zn(2+)</name>
        <dbReference type="ChEBI" id="CHEBI:29105"/>
    </ligand>
</feature>
<feature type="binding site" evidence="1">
    <location>
        <position position="236"/>
    </location>
    <ligand>
        <name>Zn(2+)</name>
        <dbReference type="ChEBI" id="CHEBI:29105"/>
    </ligand>
</feature>
<feature type="binding site" evidence="1">
    <location>
        <position position="239"/>
    </location>
    <ligand>
        <name>Zn(2+)</name>
        <dbReference type="ChEBI" id="CHEBI:29105"/>
    </ligand>
</feature>
<evidence type="ECO:0000255" key="1">
    <source>
        <dbReference type="HAMAP-Rule" id="MF_01633"/>
    </source>
</evidence>
<accession>Q5NNR3</accession>
<sequence>MTANQTKKSVPSFTSDIRQGVSNEGCLVLYSGGQDSATCLAWALEHFDRVETIGFDYGQRHKVELECRENLKQKLIQNFPDWAAHLGEDHMLDLAVLHQVSDCALTRETEIAFGEDGIPNSFVPGRNLLFFTFAATIAYRRGLRHIVGGMCETDYSGYPDCRDDTIKALQVAINLGLERRLVLHTPLMWLDKASTWQMAEEVGGKELVEIIRQESHSCYLGEREILHDWGYGCGHCPACELRAAGWESYQKSRS</sequence>
<comment type="function">
    <text evidence="1">Catalyzes the ATP-dependent conversion of 7-carboxy-7-deazaguanine (CDG) to 7-cyano-7-deazaguanine (preQ(0)).</text>
</comment>
<comment type="catalytic activity">
    <reaction evidence="1">
        <text>7-carboxy-7-deazaguanine + NH4(+) + ATP = 7-cyano-7-deazaguanine + ADP + phosphate + H2O + H(+)</text>
        <dbReference type="Rhea" id="RHEA:27982"/>
        <dbReference type="ChEBI" id="CHEBI:15377"/>
        <dbReference type="ChEBI" id="CHEBI:15378"/>
        <dbReference type="ChEBI" id="CHEBI:28938"/>
        <dbReference type="ChEBI" id="CHEBI:30616"/>
        <dbReference type="ChEBI" id="CHEBI:43474"/>
        <dbReference type="ChEBI" id="CHEBI:45075"/>
        <dbReference type="ChEBI" id="CHEBI:61036"/>
        <dbReference type="ChEBI" id="CHEBI:456216"/>
        <dbReference type="EC" id="6.3.4.20"/>
    </reaction>
</comment>
<comment type="cofactor">
    <cofactor evidence="1">
        <name>Zn(2+)</name>
        <dbReference type="ChEBI" id="CHEBI:29105"/>
    </cofactor>
    <text evidence="1">Binds 1 zinc ion per subunit.</text>
</comment>
<comment type="pathway">
    <text evidence="1">Purine metabolism; 7-cyano-7-deazaguanine biosynthesis.</text>
</comment>
<comment type="similarity">
    <text evidence="1">Belongs to the QueC family.</text>
</comment>
<dbReference type="EC" id="6.3.4.20" evidence="1"/>
<dbReference type="EMBL" id="AE008692">
    <property type="protein sequence ID" value="AAV89647.1"/>
    <property type="molecule type" value="Genomic_DNA"/>
</dbReference>
<dbReference type="RefSeq" id="WP_011240871.1">
    <property type="nucleotide sequence ID" value="NZ_CP035711.1"/>
</dbReference>
<dbReference type="SMR" id="Q5NNR3"/>
<dbReference type="STRING" id="264203.ZMO1023"/>
<dbReference type="KEGG" id="zmo:ZMO1023"/>
<dbReference type="eggNOG" id="COG0603">
    <property type="taxonomic scope" value="Bacteria"/>
</dbReference>
<dbReference type="HOGENOM" id="CLU_081854_0_0_5"/>
<dbReference type="UniPathway" id="UPA00391"/>
<dbReference type="Proteomes" id="UP000001173">
    <property type="component" value="Chromosome"/>
</dbReference>
<dbReference type="GO" id="GO:0005524">
    <property type="term" value="F:ATP binding"/>
    <property type="evidence" value="ECO:0007669"/>
    <property type="project" value="UniProtKB-UniRule"/>
</dbReference>
<dbReference type="GO" id="GO:0016879">
    <property type="term" value="F:ligase activity, forming carbon-nitrogen bonds"/>
    <property type="evidence" value="ECO:0007669"/>
    <property type="project" value="UniProtKB-UniRule"/>
</dbReference>
<dbReference type="GO" id="GO:0008270">
    <property type="term" value="F:zinc ion binding"/>
    <property type="evidence" value="ECO:0007669"/>
    <property type="project" value="UniProtKB-UniRule"/>
</dbReference>
<dbReference type="GO" id="GO:0008616">
    <property type="term" value="P:queuosine biosynthetic process"/>
    <property type="evidence" value="ECO:0007669"/>
    <property type="project" value="UniProtKB-UniRule"/>
</dbReference>
<dbReference type="CDD" id="cd01995">
    <property type="entry name" value="QueC-like"/>
    <property type="match status" value="1"/>
</dbReference>
<dbReference type="Gene3D" id="3.40.50.620">
    <property type="entry name" value="HUPs"/>
    <property type="match status" value="1"/>
</dbReference>
<dbReference type="HAMAP" id="MF_01633">
    <property type="entry name" value="QueC"/>
    <property type="match status" value="1"/>
</dbReference>
<dbReference type="InterPro" id="IPR018317">
    <property type="entry name" value="QueC"/>
</dbReference>
<dbReference type="InterPro" id="IPR014729">
    <property type="entry name" value="Rossmann-like_a/b/a_fold"/>
</dbReference>
<dbReference type="NCBIfam" id="TIGR00364">
    <property type="entry name" value="7-cyano-7-deazaguanine synthase QueC"/>
    <property type="match status" value="1"/>
</dbReference>
<dbReference type="PANTHER" id="PTHR42914">
    <property type="entry name" value="7-CYANO-7-DEAZAGUANINE SYNTHASE"/>
    <property type="match status" value="1"/>
</dbReference>
<dbReference type="PANTHER" id="PTHR42914:SF1">
    <property type="entry name" value="7-CYANO-7-DEAZAGUANINE SYNTHASE"/>
    <property type="match status" value="1"/>
</dbReference>
<dbReference type="Pfam" id="PF06508">
    <property type="entry name" value="QueC"/>
    <property type="match status" value="1"/>
</dbReference>
<dbReference type="PIRSF" id="PIRSF006293">
    <property type="entry name" value="ExsB"/>
    <property type="match status" value="1"/>
</dbReference>
<dbReference type="SUPFAM" id="SSF52402">
    <property type="entry name" value="Adenine nucleotide alpha hydrolases-like"/>
    <property type="match status" value="1"/>
</dbReference>
<keyword id="KW-0067">ATP-binding</keyword>
<keyword id="KW-0436">Ligase</keyword>
<keyword id="KW-0479">Metal-binding</keyword>
<keyword id="KW-0547">Nucleotide-binding</keyword>
<keyword id="KW-0671">Queuosine biosynthesis</keyword>
<keyword id="KW-1185">Reference proteome</keyword>
<keyword id="KW-0862">Zinc</keyword>
<organism>
    <name type="scientific">Zymomonas mobilis subsp. mobilis (strain ATCC 31821 / ZM4 / CP4)</name>
    <dbReference type="NCBI Taxonomy" id="264203"/>
    <lineage>
        <taxon>Bacteria</taxon>
        <taxon>Pseudomonadati</taxon>
        <taxon>Pseudomonadota</taxon>
        <taxon>Alphaproteobacteria</taxon>
        <taxon>Sphingomonadales</taxon>
        <taxon>Zymomonadaceae</taxon>
        <taxon>Zymomonas</taxon>
    </lineage>
</organism>
<proteinExistence type="inferred from homology"/>